<name>PDRG1_BOVIN</name>
<accession>Q148L7</accession>
<feature type="chain" id="PRO_0000252489" description="p53 and DNA damage-regulated protein 1">
    <location>
        <begin position="1"/>
        <end position="133"/>
    </location>
</feature>
<sequence>MLSPEAERVLRYLVEVEELAEEVLADKRQIVDLDTKRNRNREGLRALQKDLSLTEDVMVCFGNMFIRMPHPETKEMIEKDQEHLDKEIERLRKQLKVKVNRLFEAQGKPELKGFNLTPLNQDELKALKVILKG</sequence>
<organism>
    <name type="scientific">Bos taurus</name>
    <name type="common">Bovine</name>
    <dbReference type="NCBI Taxonomy" id="9913"/>
    <lineage>
        <taxon>Eukaryota</taxon>
        <taxon>Metazoa</taxon>
        <taxon>Chordata</taxon>
        <taxon>Craniata</taxon>
        <taxon>Vertebrata</taxon>
        <taxon>Euteleostomi</taxon>
        <taxon>Mammalia</taxon>
        <taxon>Eutheria</taxon>
        <taxon>Laurasiatheria</taxon>
        <taxon>Artiodactyla</taxon>
        <taxon>Ruminantia</taxon>
        <taxon>Pecora</taxon>
        <taxon>Bovidae</taxon>
        <taxon>Bovinae</taxon>
        <taxon>Bos</taxon>
    </lineage>
</organism>
<gene>
    <name type="primary">PDRG1</name>
</gene>
<keyword id="KW-0143">Chaperone</keyword>
<keyword id="KW-0963">Cytoplasm</keyword>
<keyword id="KW-1185">Reference proteome</keyword>
<proteinExistence type="evidence at transcript level"/>
<comment type="function">
    <text evidence="2">May play a role in chaperone-mediated protein folding.</text>
</comment>
<comment type="subunit">
    <text evidence="1">Component of the PAQosome complex which is responsible for the biogenesis of several protein complexes and which consists of R2TP complex members RUVBL1, RUVBL2, RPAP3 and PIH1D1, URI complex members PFDN2, PFDN6, PDRG1, UXT and URI1 as well as ASDURF, POLR2E and DNAAF10/WDR92.</text>
</comment>
<comment type="subcellular location">
    <subcellularLocation>
        <location evidence="2">Cytoplasm</location>
    </subcellularLocation>
</comment>
<comment type="similarity">
    <text evidence="2">Belongs to the prefoldin subunit beta family.</text>
</comment>
<reference key="1">
    <citation type="submission" date="2006-06" db="EMBL/GenBank/DDBJ databases">
        <authorList>
            <consortium name="NIH - Mammalian Gene Collection (MGC) project"/>
        </authorList>
    </citation>
    <scope>NUCLEOTIDE SEQUENCE [LARGE SCALE MRNA]</scope>
    <source>
        <strain>Hereford</strain>
        <tissue>Thalamus</tissue>
    </source>
</reference>
<evidence type="ECO:0000250" key="1">
    <source>
        <dbReference type="UniProtKB" id="Q9NUG6"/>
    </source>
</evidence>
<evidence type="ECO:0000305" key="2"/>
<protein>
    <recommendedName>
        <fullName>p53 and DNA damage-regulated protein 1</fullName>
    </recommendedName>
</protein>
<dbReference type="EMBL" id="BC118162">
    <property type="protein sequence ID" value="AAI18163.1"/>
    <property type="molecule type" value="mRNA"/>
</dbReference>
<dbReference type="RefSeq" id="NP_001071583.1">
    <property type="nucleotide sequence ID" value="NM_001078115.1"/>
</dbReference>
<dbReference type="SMR" id="Q148L7"/>
<dbReference type="FunCoup" id="Q148L7">
    <property type="interactions" value="2025"/>
</dbReference>
<dbReference type="STRING" id="9913.ENSBTAP00000012845"/>
<dbReference type="PaxDb" id="9913-ENSBTAP00000012845"/>
<dbReference type="Ensembl" id="ENSBTAT00000012845.4">
    <property type="protein sequence ID" value="ENSBTAP00000012845.3"/>
    <property type="gene ID" value="ENSBTAG00000009743.4"/>
</dbReference>
<dbReference type="GeneID" id="768241"/>
<dbReference type="KEGG" id="bta:768241"/>
<dbReference type="CTD" id="81572"/>
<dbReference type="VEuPathDB" id="HostDB:ENSBTAG00000009743"/>
<dbReference type="VGNC" id="VGNC:32716">
    <property type="gene designation" value="PDRG1"/>
</dbReference>
<dbReference type="eggNOG" id="ENOG502S6V9">
    <property type="taxonomic scope" value="Eukaryota"/>
</dbReference>
<dbReference type="GeneTree" id="ENSGT00390000013253"/>
<dbReference type="HOGENOM" id="CLU_132161_0_0_1"/>
<dbReference type="InParanoid" id="Q148L7"/>
<dbReference type="OMA" id="DEKAMVC"/>
<dbReference type="OrthoDB" id="20282at2759"/>
<dbReference type="TreeFam" id="TF329240"/>
<dbReference type="Proteomes" id="UP000009136">
    <property type="component" value="Chromosome 13"/>
</dbReference>
<dbReference type="Bgee" id="ENSBTAG00000009743">
    <property type="expression patterns" value="Expressed in triceps brachii and 106 other cell types or tissues"/>
</dbReference>
<dbReference type="GO" id="GO:0005829">
    <property type="term" value="C:cytosol"/>
    <property type="evidence" value="ECO:0007669"/>
    <property type="project" value="UniProtKB-ARBA"/>
</dbReference>
<dbReference type="GO" id="GO:0016272">
    <property type="term" value="C:prefoldin complex"/>
    <property type="evidence" value="ECO:0007669"/>
    <property type="project" value="InterPro"/>
</dbReference>
<dbReference type="GO" id="GO:1990062">
    <property type="term" value="C:RPAP3/R2TP/prefoldin-like complex"/>
    <property type="evidence" value="ECO:0007669"/>
    <property type="project" value="Ensembl"/>
</dbReference>
<dbReference type="GO" id="GO:0051082">
    <property type="term" value="F:unfolded protein binding"/>
    <property type="evidence" value="ECO:0007669"/>
    <property type="project" value="InterPro"/>
</dbReference>
<dbReference type="GO" id="GO:0006457">
    <property type="term" value="P:protein folding"/>
    <property type="evidence" value="ECO:0007669"/>
    <property type="project" value="InterPro"/>
</dbReference>
<dbReference type="CDD" id="cd22860">
    <property type="entry name" value="PDRG1"/>
    <property type="match status" value="1"/>
</dbReference>
<dbReference type="Gene3D" id="1.10.287.370">
    <property type="match status" value="1"/>
</dbReference>
<dbReference type="InterPro" id="IPR030482">
    <property type="entry name" value="PDRG1"/>
</dbReference>
<dbReference type="InterPro" id="IPR002777">
    <property type="entry name" value="PFD_beta-like"/>
</dbReference>
<dbReference type="InterPro" id="IPR009053">
    <property type="entry name" value="Prefoldin"/>
</dbReference>
<dbReference type="PANTHER" id="PTHR21162">
    <property type="entry name" value="P53 AND DNA DAMAGE-REGULATED PROTEIN"/>
    <property type="match status" value="1"/>
</dbReference>
<dbReference type="PANTHER" id="PTHR21162:SF0">
    <property type="entry name" value="P53 AND DNA DAMAGE-REGULATED PROTEIN 1"/>
    <property type="match status" value="1"/>
</dbReference>
<dbReference type="Pfam" id="PF01920">
    <property type="entry name" value="Prefoldin_2"/>
    <property type="match status" value="1"/>
</dbReference>
<dbReference type="SUPFAM" id="SSF46579">
    <property type="entry name" value="Prefoldin"/>
    <property type="match status" value="1"/>
</dbReference>